<keyword id="KW-1003">Cell membrane</keyword>
<keyword id="KW-1015">Disulfide bond</keyword>
<keyword id="KW-0325">Glycoprotein</keyword>
<keyword id="KW-0336">GPI-anchor</keyword>
<keyword id="KW-0449">Lipoprotein</keyword>
<keyword id="KW-0472">Membrane</keyword>
<keyword id="KW-1185">Reference proteome</keyword>
<keyword id="KW-0732">Signal</keyword>
<comment type="function">
    <text evidence="6">May act as a carbohydrate transporter.</text>
</comment>
<comment type="subcellular location">
    <subcellularLocation>
        <location evidence="1">Cell membrane</location>
        <topology evidence="1">Lipid-anchor</topology>
        <topology evidence="1">GPI-anchor</topology>
    </subcellularLocation>
</comment>
<comment type="tissue specificity">
    <text evidence="4">Mostly expressed in seedlings and roots, and, to a lower extent, in leaves, flowers, stems and seeds.</text>
</comment>
<comment type="similarity">
    <text evidence="7">Belongs to the early nodulin-like (ENODL) family.</text>
</comment>
<comment type="sequence caution" evidence="7">
    <conflict type="erroneous gene model prediction">
        <sequence resource="EMBL-CDS" id="AAF19686"/>
    </conflict>
</comment>
<name>ENL08_ARATH</name>
<reference key="1">
    <citation type="journal article" date="2000" name="Nature">
        <title>Sequence and analysis of chromosome 1 of the plant Arabidopsis thaliana.</title>
        <authorList>
            <person name="Theologis A."/>
            <person name="Ecker J.R."/>
            <person name="Palm C.J."/>
            <person name="Federspiel N.A."/>
            <person name="Kaul S."/>
            <person name="White O."/>
            <person name="Alonso J."/>
            <person name="Altafi H."/>
            <person name="Araujo R."/>
            <person name="Bowman C.L."/>
            <person name="Brooks S.Y."/>
            <person name="Buehler E."/>
            <person name="Chan A."/>
            <person name="Chao Q."/>
            <person name="Chen H."/>
            <person name="Cheuk R.F."/>
            <person name="Chin C.W."/>
            <person name="Chung M.K."/>
            <person name="Conn L."/>
            <person name="Conway A.B."/>
            <person name="Conway A.R."/>
            <person name="Creasy T.H."/>
            <person name="Dewar K."/>
            <person name="Dunn P."/>
            <person name="Etgu P."/>
            <person name="Feldblyum T.V."/>
            <person name="Feng J.-D."/>
            <person name="Fong B."/>
            <person name="Fujii C.Y."/>
            <person name="Gill J.E."/>
            <person name="Goldsmith A.D."/>
            <person name="Haas B."/>
            <person name="Hansen N.F."/>
            <person name="Hughes B."/>
            <person name="Huizar L."/>
            <person name="Hunter J.L."/>
            <person name="Jenkins J."/>
            <person name="Johnson-Hopson C."/>
            <person name="Khan S."/>
            <person name="Khaykin E."/>
            <person name="Kim C.J."/>
            <person name="Koo H.L."/>
            <person name="Kremenetskaia I."/>
            <person name="Kurtz D.B."/>
            <person name="Kwan A."/>
            <person name="Lam B."/>
            <person name="Langin-Hooper S."/>
            <person name="Lee A."/>
            <person name="Lee J.M."/>
            <person name="Lenz C.A."/>
            <person name="Li J.H."/>
            <person name="Li Y.-P."/>
            <person name="Lin X."/>
            <person name="Liu S.X."/>
            <person name="Liu Z.A."/>
            <person name="Luros J.S."/>
            <person name="Maiti R."/>
            <person name="Marziali A."/>
            <person name="Militscher J."/>
            <person name="Miranda M."/>
            <person name="Nguyen M."/>
            <person name="Nierman W.C."/>
            <person name="Osborne B.I."/>
            <person name="Pai G."/>
            <person name="Peterson J."/>
            <person name="Pham P.K."/>
            <person name="Rizzo M."/>
            <person name="Rooney T."/>
            <person name="Rowley D."/>
            <person name="Sakano H."/>
            <person name="Salzberg S.L."/>
            <person name="Schwartz J.R."/>
            <person name="Shinn P."/>
            <person name="Southwick A.M."/>
            <person name="Sun H."/>
            <person name="Tallon L.J."/>
            <person name="Tambunga G."/>
            <person name="Toriumi M.J."/>
            <person name="Town C.D."/>
            <person name="Utterback T."/>
            <person name="Van Aken S."/>
            <person name="Vaysberg M."/>
            <person name="Vysotskaia V.S."/>
            <person name="Walker M."/>
            <person name="Wu D."/>
            <person name="Yu G."/>
            <person name="Fraser C.M."/>
            <person name="Venter J.C."/>
            <person name="Davis R.W."/>
        </authorList>
    </citation>
    <scope>NUCLEOTIDE SEQUENCE [LARGE SCALE GENOMIC DNA]</scope>
    <source>
        <strain>cv. Columbia</strain>
    </source>
</reference>
<reference key="2">
    <citation type="journal article" date="2017" name="Plant J.">
        <title>Araport11: a complete reannotation of the Arabidopsis thaliana reference genome.</title>
        <authorList>
            <person name="Cheng C.Y."/>
            <person name="Krishnakumar V."/>
            <person name="Chan A.P."/>
            <person name="Thibaud-Nissen F."/>
            <person name="Schobel S."/>
            <person name="Town C.D."/>
        </authorList>
    </citation>
    <scope>GENOME REANNOTATION</scope>
    <source>
        <strain>cv. Columbia</strain>
    </source>
</reference>
<reference key="3">
    <citation type="submission" date="2004-03" db="EMBL/GenBank/DDBJ databases">
        <title>Arabidopsis ORF clones.</title>
        <authorList>
            <person name="Cheuk R.F."/>
            <person name="Chen H."/>
            <person name="Kim C.J."/>
            <person name="Shinn P."/>
            <person name="Ecker J.R."/>
        </authorList>
    </citation>
    <scope>NUCLEOTIDE SEQUENCE [LARGE SCALE MRNA]</scope>
    <source>
        <strain>cv. Columbia</strain>
    </source>
</reference>
<reference key="4">
    <citation type="journal article" date="2009" name="Biosci. Biotechnol. Biochem.">
        <title>Genome-wide identification, structure and expression studies, and mutant collection of 22 early nodulin-like protein genes in Arabidopsis.</title>
        <authorList>
            <person name="Mashiguchi K."/>
            <person name="Asami T."/>
            <person name="Suzuki Y."/>
        </authorList>
    </citation>
    <scope>TISSUE SPECIFICITY</scope>
    <scope>GENE FAMILY</scope>
    <scope>NOMENCLATURE</scope>
    <source>
        <strain>cv. Columbia</strain>
    </source>
</reference>
<reference key="5">
    <citation type="journal article" date="2014" name="Plant Cell Physiol.">
        <title>Emerging functions of nodulin-like proteins in non-nodulating plant species.</title>
        <authorList>
            <person name="Denance N."/>
            <person name="Szurek B."/>
            <person name="Noel L.D."/>
        </authorList>
    </citation>
    <scope>REVIEW ON NODULIN-LIKE PROTEINS</scope>
</reference>
<accession>Q6NLD7</accession>
<accession>Q9SGV1</accession>
<organism>
    <name type="scientific">Arabidopsis thaliana</name>
    <name type="common">Mouse-ear cress</name>
    <dbReference type="NCBI Taxonomy" id="3702"/>
    <lineage>
        <taxon>Eukaryota</taxon>
        <taxon>Viridiplantae</taxon>
        <taxon>Streptophyta</taxon>
        <taxon>Embryophyta</taxon>
        <taxon>Tracheophyta</taxon>
        <taxon>Spermatophyta</taxon>
        <taxon>Magnoliopsida</taxon>
        <taxon>eudicotyledons</taxon>
        <taxon>Gunneridae</taxon>
        <taxon>Pentapetalae</taxon>
        <taxon>rosids</taxon>
        <taxon>malvids</taxon>
        <taxon>Brassicales</taxon>
        <taxon>Brassicaceae</taxon>
        <taxon>Camelineae</taxon>
        <taxon>Arabidopsis</taxon>
    </lineage>
</organism>
<feature type="signal peptide" evidence="1">
    <location>
        <begin position="1"/>
        <end position="22"/>
    </location>
</feature>
<feature type="chain" id="PRO_5014310542" description="Early nodulin-like protein 8">
    <location>
        <begin position="23"/>
        <end position="165"/>
    </location>
</feature>
<feature type="propeptide" id="PRO_0000457739" description="Removed in mature form" evidence="1">
    <location>
        <begin position="166"/>
        <end position="191"/>
    </location>
</feature>
<feature type="domain" description="Phytocyanin" evidence="3">
    <location>
        <begin position="31"/>
        <end position="133"/>
    </location>
</feature>
<feature type="lipid moiety-binding region" description="GPI-anchor amidated serine" evidence="1">
    <location>
        <position position="165"/>
    </location>
</feature>
<feature type="glycosylation site" description="N-linked (GlcNAc...) asparagine" evidence="2">
    <location>
        <position position="104"/>
    </location>
</feature>
<feature type="glycosylation site" description="N-linked (GlcNAc...) asparagine" evidence="2">
    <location>
        <position position="108"/>
    </location>
</feature>
<feature type="disulfide bond" evidence="3">
    <location>
        <begin position="87"/>
        <end position="121"/>
    </location>
</feature>
<protein>
    <recommendedName>
        <fullName evidence="5">Early nodulin-like protein 8</fullName>
        <shortName evidence="5">AtENODL8</shortName>
    </recommendedName>
    <alternativeName>
        <fullName evidence="7">Phytocyanin-like protein ENODL8</fullName>
    </alternativeName>
</protein>
<proteinExistence type="evidence at transcript level"/>
<dbReference type="EMBL" id="AC009519">
    <property type="protein sequence ID" value="AAF19686.1"/>
    <property type="status" value="ALT_SEQ"/>
    <property type="molecule type" value="Genomic_DNA"/>
</dbReference>
<dbReference type="EMBL" id="CP002684">
    <property type="protein sequence ID" value="AEE34268.1"/>
    <property type="molecule type" value="Genomic_DNA"/>
</dbReference>
<dbReference type="EMBL" id="BT012210">
    <property type="protein sequence ID" value="AAS76697.1"/>
    <property type="molecule type" value="mRNA"/>
</dbReference>
<dbReference type="EMBL" id="BT012397">
    <property type="protein sequence ID" value="AAS88787.1"/>
    <property type="molecule type" value="mRNA"/>
</dbReference>
<dbReference type="PIR" id="F96669">
    <property type="entry name" value="F96669"/>
</dbReference>
<dbReference type="RefSeq" id="NP_176645.3">
    <property type="nucleotide sequence ID" value="NM_105139.5"/>
</dbReference>
<dbReference type="SMR" id="Q6NLD7"/>
<dbReference type="FunCoup" id="Q6NLD7">
    <property type="interactions" value="82"/>
</dbReference>
<dbReference type="STRING" id="3702.Q6NLD7"/>
<dbReference type="GlyGen" id="Q6NLD7">
    <property type="glycosylation" value="2 sites"/>
</dbReference>
<dbReference type="PaxDb" id="3702-AT1G64640.1"/>
<dbReference type="ProteomicsDB" id="181090"/>
<dbReference type="EnsemblPlants" id="AT1G64640.1">
    <property type="protein sequence ID" value="AT1G64640.1"/>
    <property type="gene ID" value="AT1G64640"/>
</dbReference>
<dbReference type="GeneID" id="842772"/>
<dbReference type="Gramene" id="AT1G64640.1">
    <property type="protein sequence ID" value="AT1G64640.1"/>
    <property type="gene ID" value="AT1G64640"/>
</dbReference>
<dbReference type="KEGG" id="ath:AT1G64640"/>
<dbReference type="Araport" id="AT1G64640"/>
<dbReference type="TAIR" id="AT1G64640">
    <property type="gene designation" value="ENODL8"/>
</dbReference>
<dbReference type="eggNOG" id="ENOG502RZU1">
    <property type="taxonomic scope" value="Eukaryota"/>
</dbReference>
<dbReference type="HOGENOM" id="CLU_058719_1_1_1"/>
<dbReference type="InParanoid" id="Q6NLD7"/>
<dbReference type="OMA" id="SANPGHC"/>
<dbReference type="PRO" id="PR:Q6NLD7"/>
<dbReference type="Proteomes" id="UP000006548">
    <property type="component" value="Chromosome 1"/>
</dbReference>
<dbReference type="ExpressionAtlas" id="Q6NLD7">
    <property type="expression patterns" value="baseline and differential"/>
</dbReference>
<dbReference type="GO" id="GO:0005886">
    <property type="term" value="C:plasma membrane"/>
    <property type="evidence" value="ECO:0007669"/>
    <property type="project" value="UniProtKB-SubCell"/>
</dbReference>
<dbReference type="GO" id="GO:0098552">
    <property type="term" value="C:side of membrane"/>
    <property type="evidence" value="ECO:0007669"/>
    <property type="project" value="UniProtKB-KW"/>
</dbReference>
<dbReference type="GO" id="GO:0009055">
    <property type="term" value="F:electron transfer activity"/>
    <property type="evidence" value="ECO:0007669"/>
    <property type="project" value="InterPro"/>
</dbReference>
<dbReference type="CDD" id="cd11019">
    <property type="entry name" value="OsENODL1_like"/>
    <property type="match status" value="1"/>
</dbReference>
<dbReference type="FunFam" id="2.60.40.420:FF:000010">
    <property type="entry name" value="Early nodulin-like protein 1"/>
    <property type="match status" value="1"/>
</dbReference>
<dbReference type="Gene3D" id="2.60.40.420">
    <property type="entry name" value="Cupredoxins - blue copper proteins"/>
    <property type="match status" value="1"/>
</dbReference>
<dbReference type="InterPro" id="IPR008972">
    <property type="entry name" value="Cupredoxin"/>
</dbReference>
<dbReference type="InterPro" id="IPR041846">
    <property type="entry name" value="ENL_dom"/>
</dbReference>
<dbReference type="InterPro" id="IPR039391">
    <property type="entry name" value="Phytocyanin-like"/>
</dbReference>
<dbReference type="InterPro" id="IPR003245">
    <property type="entry name" value="Phytocyanin_dom"/>
</dbReference>
<dbReference type="PANTHER" id="PTHR33021">
    <property type="entry name" value="BLUE COPPER PROTEIN"/>
    <property type="match status" value="1"/>
</dbReference>
<dbReference type="PANTHER" id="PTHR33021:SF44">
    <property type="entry name" value="EARLY NODULIN-LIKE PROTEIN 8"/>
    <property type="match status" value="1"/>
</dbReference>
<dbReference type="Pfam" id="PF02298">
    <property type="entry name" value="Cu_bind_like"/>
    <property type="match status" value="1"/>
</dbReference>
<dbReference type="SUPFAM" id="SSF49503">
    <property type="entry name" value="Cupredoxins"/>
    <property type="match status" value="1"/>
</dbReference>
<dbReference type="PROSITE" id="PS51485">
    <property type="entry name" value="PHYTOCYANIN"/>
    <property type="match status" value="1"/>
</dbReference>
<sequence length="191" mass="20251">MGVMSLSKTMVVVVLQVMILLGQEIGKVSSTLYKVGDLDAWGIPIDAKVYSKWPKSHSFKIGDSLLFLYPPSEDSLIQVTPSNFKSCNTKDPILYMNDGNSLFNLTQNGTLYFTSANPGHCTKYQKLLVSVGTYSAEAEALSPSSAADAPSYQNAFGSIPLSQKSSASSSLISAFSTVAASLACAVVGAIM</sequence>
<evidence type="ECO:0000255" key="1"/>
<evidence type="ECO:0000255" key="2">
    <source>
        <dbReference type="PROSITE-ProRule" id="PRU00498"/>
    </source>
</evidence>
<evidence type="ECO:0000255" key="3">
    <source>
        <dbReference type="PROSITE-ProRule" id="PRU00818"/>
    </source>
</evidence>
<evidence type="ECO:0000269" key="4">
    <source>
    </source>
</evidence>
<evidence type="ECO:0000303" key="5">
    <source>
    </source>
</evidence>
<evidence type="ECO:0000303" key="6">
    <source>
    </source>
</evidence>
<evidence type="ECO:0000305" key="7"/>
<evidence type="ECO:0000312" key="8">
    <source>
        <dbReference type="Araport" id="AT1G64640"/>
    </source>
</evidence>
<evidence type="ECO:0000312" key="9">
    <source>
        <dbReference type="EMBL" id="AAF19686.1"/>
    </source>
</evidence>
<gene>
    <name evidence="5" type="primary">ENODL8</name>
    <name evidence="5" type="synonym">EN8</name>
    <name evidence="8" type="ordered locus">At1g64640</name>
    <name evidence="9" type="ORF">F1N19.21</name>
</gene>